<name>DDL_RUEST</name>
<gene>
    <name evidence="2" type="primary">ddl</name>
    <name type="ordered locus">TM1040_0686</name>
</gene>
<keyword id="KW-0067">ATP-binding</keyword>
<keyword id="KW-0133">Cell shape</keyword>
<keyword id="KW-0961">Cell wall biogenesis/degradation</keyword>
<keyword id="KW-0963">Cytoplasm</keyword>
<keyword id="KW-0436">Ligase</keyword>
<keyword id="KW-0460">Magnesium</keyword>
<keyword id="KW-0464">Manganese</keyword>
<keyword id="KW-0479">Metal-binding</keyword>
<keyword id="KW-0547">Nucleotide-binding</keyword>
<keyword id="KW-0573">Peptidoglycan synthesis</keyword>
<keyword id="KW-1185">Reference proteome</keyword>
<feature type="chain" id="PRO_0000341174" description="D-alanine--D-alanine ligase">
    <location>
        <begin position="1"/>
        <end position="306"/>
    </location>
</feature>
<feature type="domain" description="ATP-grasp" evidence="2">
    <location>
        <begin position="107"/>
        <end position="300"/>
    </location>
</feature>
<feature type="binding site" evidence="2">
    <location>
        <begin position="134"/>
        <end position="184"/>
    </location>
    <ligand>
        <name>ATP</name>
        <dbReference type="ChEBI" id="CHEBI:30616"/>
    </ligand>
</feature>
<feature type="binding site" evidence="2">
    <location>
        <position position="251"/>
    </location>
    <ligand>
        <name>Mg(2+)</name>
        <dbReference type="ChEBI" id="CHEBI:18420"/>
        <label>1</label>
    </ligand>
</feature>
<feature type="binding site" evidence="2">
    <location>
        <position position="267"/>
    </location>
    <ligand>
        <name>Mg(2+)</name>
        <dbReference type="ChEBI" id="CHEBI:18420"/>
        <label>1</label>
    </ligand>
</feature>
<feature type="binding site" evidence="2">
    <location>
        <position position="267"/>
    </location>
    <ligand>
        <name>Mg(2+)</name>
        <dbReference type="ChEBI" id="CHEBI:18420"/>
        <label>2</label>
    </ligand>
</feature>
<feature type="binding site" evidence="2">
    <location>
        <position position="269"/>
    </location>
    <ligand>
        <name>Mg(2+)</name>
        <dbReference type="ChEBI" id="CHEBI:18420"/>
        <label>2</label>
    </ligand>
</feature>
<reference key="1">
    <citation type="submission" date="2006-05" db="EMBL/GenBank/DDBJ databases">
        <title>Complete sequence of chromosome of Silicibacter sp. TM1040.</title>
        <authorList>
            <consortium name="US DOE Joint Genome Institute"/>
            <person name="Copeland A."/>
            <person name="Lucas S."/>
            <person name="Lapidus A."/>
            <person name="Barry K."/>
            <person name="Detter J.C."/>
            <person name="Glavina del Rio T."/>
            <person name="Hammon N."/>
            <person name="Israni S."/>
            <person name="Dalin E."/>
            <person name="Tice H."/>
            <person name="Pitluck S."/>
            <person name="Brettin T."/>
            <person name="Bruce D."/>
            <person name="Han C."/>
            <person name="Tapia R."/>
            <person name="Goodwin L."/>
            <person name="Thompson L.S."/>
            <person name="Gilna P."/>
            <person name="Schmutz J."/>
            <person name="Larimer F."/>
            <person name="Land M."/>
            <person name="Hauser L."/>
            <person name="Kyrpides N."/>
            <person name="Kim E."/>
            <person name="Belas R."/>
            <person name="Moran M.A."/>
            <person name="Buchan A."/>
            <person name="Gonzalez J.M."/>
            <person name="Schell M.A."/>
            <person name="Sun F."/>
            <person name="Richardson P."/>
        </authorList>
    </citation>
    <scope>NUCLEOTIDE SEQUENCE [LARGE SCALE GENOMIC DNA]</scope>
    <source>
        <strain>TM1040</strain>
    </source>
</reference>
<organism>
    <name type="scientific">Ruegeria sp. (strain TM1040)</name>
    <name type="common">Silicibacter sp.</name>
    <dbReference type="NCBI Taxonomy" id="292414"/>
    <lineage>
        <taxon>Bacteria</taxon>
        <taxon>Pseudomonadati</taxon>
        <taxon>Pseudomonadota</taxon>
        <taxon>Alphaproteobacteria</taxon>
        <taxon>Rhodobacterales</taxon>
        <taxon>Roseobacteraceae</taxon>
        <taxon>Ruegeria</taxon>
    </lineage>
</organism>
<accession>Q1GIU7</accession>
<proteinExistence type="inferred from homology"/>
<evidence type="ECO:0000250" key="1"/>
<evidence type="ECO:0000255" key="2">
    <source>
        <dbReference type="HAMAP-Rule" id="MF_00047"/>
    </source>
</evidence>
<sequence length="306" mass="32878">MGGASGTLPKVAMLMGGPSAEREVSLSTGRECARALRGQGYEVVEVDAGPDLVAQLNDIKPDVAFNALHGRWGEDGCVQGLLEWLRIPYTHSGVLASALAMDKERSKAAYRTAGLPVVDSVIAAKADVMARHVIAPPYVVKPNNEGSSVGIYIVHEATNSPPQLSEEMPAQVMVEAYAPGREMTVTVMGDRALCVTDILTDGWYDYEAKYATGGSRHVLPAEIPDEIADLCHDYALRAHQVLGCRGISRTDFRWDEARGADGLVLLETNTQPGMTPTSLSPEQAEHVGLTFGQLCAWLVEDASCER</sequence>
<protein>
    <recommendedName>
        <fullName evidence="2">D-alanine--D-alanine ligase</fullName>
        <ecNumber evidence="2">6.3.2.4</ecNumber>
    </recommendedName>
    <alternativeName>
        <fullName evidence="2">D-Ala-D-Ala ligase</fullName>
    </alternativeName>
    <alternativeName>
        <fullName evidence="2">D-alanylalanine synthetase</fullName>
    </alternativeName>
</protein>
<dbReference type="EC" id="6.3.2.4" evidence="2"/>
<dbReference type="EMBL" id="CP000377">
    <property type="protein sequence ID" value="ABF63419.1"/>
    <property type="molecule type" value="Genomic_DNA"/>
</dbReference>
<dbReference type="SMR" id="Q1GIU7"/>
<dbReference type="STRING" id="292414.TM1040_0686"/>
<dbReference type="KEGG" id="sit:TM1040_0686"/>
<dbReference type="eggNOG" id="COG1181">
    <property type="taxonomic scope" value="Bacteria"/>
</dbReference>
<dbReference type="HOGENOM" id="CLU_039268_1_1_5"/>
<dbReference type="OrthoDB" id="9813261at2"/>
<dbReference type="UniPathway" id="UPA00219"/>
<dbReference type="Proteomes" id="UP000000636">
    <property type="component" value="Chromosome"/>
</dbReference>
<dbReference type="GO" id="GO:0005737">
    <property type="term" value="C:cytoplasm"/>
    <property type="evidence" value="ECO:0007669"/>
    <property type="project" value="UniProtKB-SubCell"/>
</dbReference>
<dbReference type="GO" id="GO:0005524">
    <property type="term" value="F:ATP binding"/>
    <property type="evidence" value="ECO:0007669"/>
    <property type="project" value="UniProtKB-KW"/>
</dbReference>
<dbReference type="GO" id="GO:0008716">
    <property type="term" value="F:D-alanine-D-alanine ligase activity"/>
    <property type="evidence" value="ECO:0007669"/>
    <property type="project" value="UniProtKB-UniRule"/>
</dbReference>
<dbReference type="GO" id="GO:0046872">
    <property type="term" value="F:metal ion binding"/>
    <property type="evidence" value="ECO:0007669"/>
    <property type="project" value="UniProtKB-KW"/>
</dbReference>
<dbReference type="GO" id="GO:0071555">
    <property type="term" value="P:cell wall organization"/>
    <property type="evidence" value="ECO:0007669"/>
    <property type="project" value="UniProtKB-KW"/>
</dbReference>
<dbReference type="GO" id="GO:0009252">
    <property type="term" value="P:peptidoglycan biosynthetic process"/>
    <property type="evidence" value="ECO:0007669"/>
    <property type="project" value="UniProtKB-UniRule"/>
</dbReference>
<dbReference type="GO" id="GO:0008360">
    <property type="term" value="P:regulation of cell shape"/>
    <property type="evidence" value="ECO:0007669"/>
    <property type="project" value="UniProtKB-KW"/>
</dbReference>
<dbReference type="Gene3D" id="3.40.50.20">
    <property type="match status" value="1"/>
</dbReference>
<dbReference type="Gene3D" id="3.30.1490.20">
    <property type="entry name" value="ATP-grasp fold, A domain"/>
    <property type="match status" value="1"/>
</dbReference>
<dbReference type="Gene3D" id="3.30.470.20">
    <property type="entry name" value="ATP-grasp fold, B domain"/>
    <property type="match status" value="1"/>
</dbReference>
<dbReference type="HAMAP" id="MF_00047">
    <property type="entry name" value="Dala_Dala_lig"/>
    <property type="match status" value="1"/>
</dbReference>
<dbReference type="InterPro" id="IPR011761">
    <property type="entry name" value="ATP-grasp"/>
</dbReference>
<dbReference type="InterPro" id="IPR013815">
    <property type="entry name" value="ATP_grasp_subdomain_1"/>
</dbReference>
<dbReference type="InterPro" id="IPR000291">
    <property type="entry name" value="D-Ala_lig_Van_CS"/>
</dbReference>
<dbReference type="InterPro" id="IPR005905">
    <property type="entry name" value="D_ala_D_ala"/>
</dbReference>
<dbReference type="InterPro" id="IPR011095">
    <property type="entry name" value="Dala_Dala_lig_C"/>
</dbReference>
<dbReference type="InterPro" id="IPR011127">
    <property type="entry name" value="Dala_Dala_lig_N"/>
</dbReference>
<dbReference type="InterPro" id="IPR016185">
    <property type="entry name" value="PreATP-grasp_dom_sf"/>
</dbReference>
<dbReference type="NCBIfam" id="TIGR01205">
    <property type="entry name" value="D_ala_D_alaTIGR"/>
    <property type="match status" value="1"/>
</dbReference>
<dbReference type="NCBIfam" id="NF002378">
    <property type="entry name" value="PRK01372.1"/>
    <property type="match status" value="1"/>
</dbReference>
<dbReference type="PANTHER" id="PTHR23132">
    <property type="entry name" value="D-ALANINE--D-ALANINE LIGASE"/>
    <property type="match status" value="1"/>
</dbReference>
<dbReference type="PANTHER" id="PTHR23132:SF23">
    <property type="entry name" value="D-ALANINE--D-ALANINE LIGASE B"/>
    <property type="match status" value="1"/>
</dbReference>
<dbReference type="Pfam" id="PF07478">
    <property type="entry name" value="Dala_Dala_lig_C"/>
    <property type="match status" value="1"/>
</dbReference>
<dbReference type="Pfam" id="PF01820">
    <property type="entry name" value="Dala_Dala_lig_N"/>
    <property type="match status" value="1"/>
</dbReference>
<dbReference type="PIRSF" id="PIRSF039102">
    <property type="entry name" value="Ddl/VanB"/>
    <property type="match status" value="1"/>
</dbReference>
<dbReference type="SUPFAM" id="SSF56059">
    <property type="entry name" value="Glutathione synthetase ATP-binding domain-like"/>
    <property type="match status" value="1"/>
</dbReference>
<dbReference type="SUPFAM" id="SSF52440">
    <property type="entry name" value="PreATP-grasp domain"/>
    <property type="match status" value="1"/>
</dbReference>
<dbReference type="PROSITE" id="PS50975">
    <property type="entry name" value="ATP_GRASP"/>
    <property type="match status" value="1"/>
</dbReference>
<dbReference type="PROSITE" id="PS00843">
    <property type="entry name" value="DALA_DALA_LIGASE_1"/>
    <property type="match status" value="1"/>
</dbReference>
<dbReference type="PROSITE" id="PS00844">
    <property type="entry name" value="DALA_DALA_LIGASE_2"/>
    <property type="match status" value="1"/>
</dbReference>
<comment type="function">
    <text evidence="2">Cell wall formation.</text>
</comment>
<comment type="catalytic activity">
    <reaction evidence="2">
        <text>2 D-alanine + ATP = D-alanyl-D-alanine + ADP + phosphate + H(+)</text>
        <dbReference type="Rhea" id="RHEA:11224"/>
        <dbReference type="ChEBI" id="CHEBI:15378"/>
        <dbReference type="ChEBI" id="CHEBI:30616"/>
        <dbReference type="ChEBI" id="CHEBI:43474"/>
        <dbReference type="ChEBI" id="CHEBI:57416"/>
        <dbReference type="ChEBI" id="CHEBI:57822"/>
        <dbReference type="ChEBI" id="CHEBI:456216"/>
        <dbReference type="EC" id="6.3.2.4"/>
    </reaction>
</comment>
<comment type="cofactor">
    <cofactor evidence="1">
        <name>Mg(2+)</name>
        <dbReference type="ChEBI" id="CHEBI:18420"/>
    </cofactor>
    <cofactor evidence="1">
        <name>Mn(2+)</name>
        <dbReference type="ChEBI" id="CHEBI:29035"/>
    </cofactor>
    <text evidence="1">Binds 2 magnesium or manganese ions per subunit.</text>
</comment>
<comment type="pathway">
    <text evidence="2">Cell wall biogenesis; peptidoglycan biosynthesis.</text>
</comment>
<comment type="subcellular location">
    <subcellularLocation>
        <location evidence="2">Cytoplasm</location>
    </subcellularLocation>
</comment>
<comment type="similarity">
    <text evidence="2">Belongs to the D-alanine--D-alanine ligase family.</text>
</comment>